<name>RL31_HELPJ</name>
<dbReference type="EMBL" id="AE001439">
    <property type="protein sequence ID" value="AAD06076.1"/>
    <property type="molecule type" value="Genomic_DNA"/>
</dbReference>
<dbReference type="RefSeq" id="WP_000715278.1">
    <property type="nucleotide sequence ID" value="NZ_CP011330.1"/>
</dbReference>
<dbReference type="SMR" id="P66186"/>
<dbReference type="GeneID" id="93236900"/>
<dbReference type="KEGG" id="hpj:jhp_0498"/>
<dbReference type="PATRIC" id="fig|85963.30.peg.498"/>
<dbReference type="eggNOG" id="COG0254">
    <property type="taxonomic scope" value="Bacteria"/>
</dbReference>
<dbReference type="Proteomes" id="UP000000804">
    <property type="component" value="Chromosome"/>
</dbReference>
<dbReference type="GO" id="GO:1990904">
    <property type="term" value="C:ribonucleoprotein complex"/>
    <property type="evidence" value="ECO:0007669"/>
    <property type="project" value="UniProtKB-KW"/>
</dbReference>
<dbReference type="GO" id="GO:0005840">
    <property type="term" value="C:ribosome"/>
    <property type="evidence" value="ECO:0007669"/>
    <property type="project" value="UniProtKB-KW"/>
</dbReference>
<dbReference type="GO" id="GO:0019843">
    <property type="term" value="F:rRNA binding"/>
    <property type="evidence" value="ECO:0007669"/>
    <property type="project" value="UniProtKB-KW"/>
</dbReference>
<dbReference type="GO" id="GO:0003735">
    <property type="term" value="F:structural constituent of ribosome"/>
    <property type="evidence" value="ECO:0007669"/>
    <property type="project" value="InterPro"/>
</dbReference>
<dbReference type="GO" id="GO:0006412">
    <property type="term" value="P:translation"/>
    <property type="evidence" value="ECO:0007669"/>
    <property type="project" value="UniProtKB-UniRule"/>
</dbReference>
<dbReference type="Gene3D" id="4.10.830.30">
    <property type="entry name" value="Ribosomal protein L31"/>
    <property type="match status" value="1"/>
</dbReference>
<dbReference type="HAMAP" id="MF_00501">
    <property type="entry name" value="Ribosomal_bL31_1"/>
    <property type="match status" value="1"/>
</dbReference>
<dbReference type="InterPro" id="IPR034704">
    <property type="entry name" value="Ribosomal_bL28/bL31-like_sf"/>
</dbReference>
<dbReference type="InterPro" id="IPR002150">
    <property type="entry name" value="Ribosomal_bL31"/>
</dbReference>
<dbReference type="InterPro" id="IPR027491">
    <property type="entry name" value="Ribosomal_bL31_A"/>
</dbReference>
<dbReference type="InterPro" id="IPR042105">
    <property type="entry name" value="Ribosomal_bL31_sf"/>
</dbReference>
<dbReference type="NCBIfam" id="TIGR00105">
    <property type="entry name" value="L31"/>
    <property type="match status" value="1"/>
</dbReference>
<dbReference type="NCBIfam" id="NF000612">
    <property type="entry name" value="PRK00019.1"/>
    <property type="match status" value="1"/>
</dbReference>
<dbReference type="NCBIfam" id="NF001809">
    <property type="entry name" value="PRK00528.1"/>
    <property type="match status" value="1"/>
</dbReference>
<dbReference type="PANTHER" id="PTHR33280">
    <property type="entry name" value="50S RIBOSOMAL PROTEIN L31, CHLOROPLASTIC"/>
    <property type="match status" value="1"/>
</dbReference>
<dbReference type="PANTHER" id="PTHR33280:SF6">
    <property type="entry name" value="LARGE RIBOSOMAL SUBUNIT PROTEIN BL31A"/>
    <property type="match status" value="1"/>
</dbReference>
<dbReference type="Pfam" id="PF01197">
    <property type="entry name" value="Ribosomal_L31"/>
    <property type="match status" value="1"/>
</dbReference>
<dbReference type="PRINTS" id="PR01249">
    <property type="entry name" value="RIBOSOMALL31"/>
</dbReference>
<dbReference type="SUPFAM" id="SSF143800">
    <property type="entry name" value="L28p-like"/>
    <property type="match status" value="1"/>
</dbReference>
<dbReference type="PROSITE" id="PS01143">
    <property type="entry name" value="RIBOSOMAL_L31"/>
    <property type="match status" value="1"/>
</dbReference>
<feature type="chain" id="PRO_0000173116" description="Large ribosomal subunit protein bL31">
    <location>
        <begin position="1"/>
        <end position="67"/>
    </location>
</feature>
<accession>P66186</accession>
<accession>P56053</accession>
<evidence type="ECO:0000255" key="1">
    <source>
        <dbReference type="HAMAP-Rule" id="MF_00501"/>
    </source>
</evidence>
<evidence type="ECO:0000305" key="2"/>
<comment type="function">
    <text evidence="1">Binds the 23S rRNA.</text>
</comment>
<comment type="subunit">
    <text evidence="1">Part of the 50S ribosomal subunit.</text>
</comment>
<comment type="similarity">
    <text evidence="1">Belongs to the bacterial ribosomal protein bL31 family. Type A subfamily.</text>
</comment>
<sequence>MKKGIHPEYIPCKVTCVTSGKEIEVLSTKPEMRIDISSFCHPFYTGSDKIADTAGRVEKFKQRYNLK</sequence>
<organism>
    <name type="scientific">Helicobacter pylori (strain J99 / ATCC 700824)</name>
    <name type="common">Campylobacter pylori J99</name>
    <dbReference type="NCBI Taxonomy" id="85963"/>
    <lineage>
        <taxon>Bacteria</taxon>
        <taxon>Pseudomonadati</taxon>
        <taxon>Campylobacterota</taxon>
        <taxon>Epsilonproteobacteria</taxon>
        <taxon>Campylobacterales</taxon>
        <taxon>Helicobacteraceae</taxon>
        <taxon>Helicobacter</taxon>
    </lineage>
</organism>
<protein>
    <recommendedName>
        <fullName evidence="1">Large ribosomal subunit protein bL31</fullName>
    </recommendedName>
    <alternativeName>
        <fullName evidence="2">50S ribosomal protein L31</fullName>
    </alternativeName>
</protein>
<proteinExistence type="inferred from homology"/>
<keyword id="KW-0687">Ribonucleoprotein</keyword>
<keyword id="KW-0689">Ribosomal protein</keyword>
<keyword id="KW-0694">RNA-binding</keyword>
<keyword id="KW-0699">rRNA-binding</keyword>
<reference key="1">
    <citation type="journal article" date="1999" name="Nature">
        <title>Genomic sequence comparison of two unrelated isolates of the human gastric pathogen Helicobacter pylori.</title>
        <authorList>
            <person name="Alm R.A."/>
            <person name="Ling L.-S.L."/>
            <person name="Moir D.T."/>
            <person name="King B.L."/>
            <person name="Brown E.D."/>
            <person name="Doig P.C."/>
            <person name="Smith D.R."/>
            <person name="Noonan B."/>
            <person name="Guild B.C."/>
            <person name="deJonge B.L."/>
            <person name="Carmel G."/>
            <person name="Tummino P.J."/>
            <person name="Caruso A."/>
            <person name="Uria-Nickelsen M."/>
            <person name="Mills D.M."/>
            <person name="Ives C."/>
            <person name="Gibson R."/>
            <person name="Merberg D."/>
            <person name="Mills S.D."/>
            <person name="Jiang Q."/>
            <person name="Taylor D.E."/>
            <person name="Vovis G.F."/>
            <person name="Trust T.J."/>
        </authorList>
    </citation>
    <scope>NUCLEOTIDE SEQUENCE [LARGE SCALE GENOMIC DNA]</scope>
    <source>
        <strain>J99 / ATCC 700824</strain>
    </source>
</reference>
<gene>
    <name evidence="1" type="primary">rpmE</name>
    <name type="ordered locus">jhp_0498</name>
</gene>